<sequence length="177" mass="19564">MLQTYKDQLPDYAKDLKLNLTQVLSESPSSELSNQQITGVALAVAYATRNRQLIELIFQKAEAELDESTLQAIKAAASIMAMNNIYYRFVHLVKDSEYQRLPANLRMNIIANPGIDKKDFELYSLAVSAINGCGLCIDAHANTLIKAGFSKHSIQHVIRIAAVLNGLAQVSIIENKT</sequence>
<feature type="chain" id="PRO_0000359487" description="Alkyl hydroperoxide reductase AhpD">
    <location>
        <begin position="1"/>
        <end position="177"/>
    </location>
</feature>
<feature type="active site" description="Proton donor" evidence="2">
    <location>
        <position position="133"/>
    </location>
</feature>
<feature type="active site" description="Cysteine sulfenic acid (-SOH) intermediate" evidence="2">
    <location>
        <position position="136"/>
    </location>
</feature>
<feature type="disulfide bond" evidence="1">
    <location>
        <begin position="133"/>
        <end position="136"/>
    </location>
</feature>
<feature type="disulfide bond" description="Interchain (with AhpC); in linked form" evidence="2">
    <location>
        <position position="136"/>
    </location>
</feature>
<evidence type="ECO:0000250" key="1"/>
<evidence type="ECO:0000255" key="2">
    <source>
        <dbReference type="HAMAP-Rule" id="MF_01676"/>
    </source>
</evidence>
<dbReference type="EC" id="1.11.1.28" evidence="2"/>
<dbReference type="EMBL" id="CP000890">
    <property type="protein sequence ID" value="ABX77771.1"/>
    <property type="molecule type" value="Genomic_DNA"/>
</dbReference>
<dbReference type="RefSeq" id="WP_012220673.1">
    <property type="nucleotide sequence ID" value="NC_010117.1"/>
</dbReference>
<dbReference type="SMR" id="A9N917"/>
<dbReference type="KEGG" id="cbs:COXBURSA331_A1656"/>
<dbReference type="HOGENOM" id="CLU_105328_0_0_6"/>
<dbReference type="GO" id="GO:0008785">
    <property type="term" value="F:alkyl hydroperoxide reductase activity"/>
    <property type="evidence" value="ECO:0007669"/>
    <property type="project" value="UniProtKB-UniRule"/>
</dbReference>
<dbReference type="GO" id="GO:0015036">
    <property type="term" value="F:disulfide oxidoreductase activity"/>
    <property type="evidence" value="ECO:0007669"/>
    <property type="project" value="TreeGrafter"/>
</dbReference>
<dbReference type="GO" id="GO:0032843">
    <property type="term" value="F:hydroperoxide reductase activity"/>
    <property type="evidence" value="ECO:0007669"/>
    <property type="project" value="InterPro"/>
</dbReference>
<dbReference type="GO" id="GO:0051920">
    <property type="term" value="F:peroxiredoxin activity"/>
    <property type="evidence" value="ECO:0007669"/>
    <property type="project" value="InterPro"/>
</dbReference>
<dbReference type="GO" id="GO:0045454">
    <property type="term" value="P:cell redox homeostasis"/>
    <property type="evidence" value="ECO:0007669"/>
    <property type="project" value="TreeGrafter"/>
</dbReference>
<dbReference type="GO" id="GO:0006979">
    <property type="term" value="P:response to oxidative stress"/>
    <property type="evidence" value="ECO:0007669"/>
    <property type="project" value="InterPro"/>
</dbReference>
<dbReference type="Gene3D" id="1.20.1290.10">
    <property type="entry name" value="AhpD-like"/>
    <property type="match status" value="1"/>
</dbReference>
<dbReference type="HAMAP" id="MF_01676">
    <property type="entry name" value="AhpD"/>
    <property type="match status" value="1"/>
</dbReference>
<dbReference type="InterPro" id="IPR004674">
    <property type="entry name" value="AhpD"/>
</dbReference>
<dbReference type="InterPro" id="IPR029032">
    <property type="entry name" value="AhpD-like"/>
</dbReference>
<dbReference type="InterPro" id="IPR004675">
    <property type="entry name" value="AhpD_core"/>
</dbReference>
<dbReference type="InterPro" id="IPR003779">
    <property type="entry name" value="CMD-like"/>
</dbReference>
<dbReference type="NCBIfam" id="TIGR00778">
    <property type="entry name" value="ahpD_dom"/>
    <property type="match status" value="1"/>
</dbReference>
<dbReference type="PANTHER" id="PTHR33930">
    <property type="entry name" value="ALKYL HYDROPEROXIDE REDUCTASE AHPD"/>
    <property type="match status" value="1"/>
</dbReference>
<dbReference type="PANTHER" id="PTHR33930:SF7">
    <property type="entry name" value="ALKYL HYDROPEROXIDE REDUCTASE AHPD"/>
    <property type="match status" value="1"/>
</dbReference>
<dbReference type="Pfam" id="PF02627">
    <property type="entry name" value="CMD"/>
    <property type="match status" value="1"/>
</dbReference>
<dbReference type="SUPFAM" id="SSF69118">
    <property type="entry name" value="AhpD-like"/>
    <property type="match status" value="1"/>
</dbReference>
<proteinExistence type="inferred from homology"/>
<protein>
    <recommendedName>
        <fullName evidence="2">Alkyl hydroperoxide reductase AhpD</fullName>
        <ecNumber evidence="2">1.11.1.28</ecNumber>
    </recommendedName>
    <alternativeName>
        <fullName evidence="2">Alkylhydroperoxidase AhpD</fullName>
    </alternativeName>
</protein>
<comment type="function">
    <text evidence="2">Antioxidant protein with alkyl hydroperoxidase activity. Required for the reduction of the AhpC active site cysteine residues and for the regeneration of the AhpC enzyme activity.</text>
</comment>
<comment type="catalytic activity">
    <reaction evidence="2">
        <text>N(6)-[(R)-dihydrolipoyl]-L-lysyl-[lipoyl-carrier protein] + a hydroperoxide = N(6)-[(R)-lipoyl]-L-lysyl-[lipoyl-carrier protein] + an alcohol + H2O</text>
        <dbReference type="Rhea" id="RHEA:62636"/>
        <dbReference type="Rhea" id="RHEA-COMP:10502"/>
        <dbReference type="Rhea" id="RHEA-COMP:16355"/>
        <dbReference type="ChEBI" id="CHEBI:15377"/>
        <dbReference type="ChEBI" id="CHEBI:30879"/>
        <dbReference type="ChEBI" id="CHEBI:35924"/>
        <dbReference type="ChEBI" id="CHEBI:83099"/>
        <dbReference type="ChEBI" id="CHEBI:83100"/>
        <dbReference type="EC" id="1.11.1.28"/>
    </reaction>
</comment>
<comment type="similarity">
    <text evidence="2">Belongs to the AhpD family.</text>
</comment>
<keyword id="KW-0049">Antioxidant</keyword>
<keyword id="KW-1015">Disulfide bond</keyword>
<keyword id="KW-0560">Oxidoreductase</keyword>
<keyword id="KW-0575">Peroxidase</keyword>
<keyword id="KW-0676">Redox-active center</keyword>
<name>AHPD_COXBR</name>
<accession>A9N917</accession>
<reference key="1">
    <citation type="submission" date="2007-11" db="EMBL/GenBank/DDBJ databases">
        <title>Genome sequencing of phylogenetically and phenotypically diverse Coxiella burnetii isolates.</title>
        <authorList>
            <person name="Seshadri R."/>
            <person name="Samuel J.E."/>
        </authorList>
    </citation>
    <scope>NUCLEOTIDE SEQUENCE [LARGE SCALE GENOMIC DNA]</scope>
    <source>
        <strain>RSA 331 / Henzerling II</strain>
    </source>
</reference>
<gene>
    <name evidence="2" type="primary">ahpD</name>
    <name type="ordered locus">COXBURSA331_A1656</name>
</gene>
<organism>
    <name type="scientific">Coxiella burnetii (strain RSA 331 / Henzerling II)</name>
    <dbReference type="NCBI Taxonomy" id="360115"/>
    <lineage>
        <taxon>Bacteria</taxon>
        <taxon>Pseudomonadati</taxon>
        <taxon>Pseudomonadota</taxon>
        <taxon>Gammaproteobacteria</taxon>
        <taxon>Legionellales</taxon>
        <taxon>Coxiellaceae</taxon>
        <taxon>Coxiella</taxon>
    </lineage>
</organism>